<comment type="function">
    <text evidence="1">Plays a critical role in catalyzing the release of class II-associated invariant chain peptide (CLIP) from newly synthesized MHC class II molecules and freeing the peptide binding site for acquisition of antigenic peptides.</text>
</comment>
<comment type="subunit">
    <text evidence="1">Heterodimer of an alpha chain (DMA) and a beta chain (DMB). Interacts with MHCII; this interaction mediates rapid selection of high-affinity peptides.</text>
</comment>
<comment type="subcellular location">
    <subcellularLocation>
        <location evidence="4">Late endosome membrane</location>
        <topology evidence="4">Single-pass type I membrane protein</topology>
    </subcellularLocation>
    <subcellularLocation>
        <location evidence="4">Lysosome membrane</location>
        <topology evidence="4">Single-pass type I membrane protein</topology>
    </subcellularLocation>
    <text>Localizes to late endocytic compartment. Associates with lysosome membranes.</text>
</comment>
<comment type="domain">
    <text>The YXXZ (Tyr-Xaa-Xaa-Zaa, where Zaa is a hydrophobic residue) motif mediates the targeting to the lysosomal compartments.</text>
</comment>
<comment type="similarity">
    <text evidence="5">Belongs to the MHC class II family.</text>
</comment>
<organism>
    <name type="scientific">Mus musculus</name>
    <name type="common">Mouse</name>
    <dbReference type="NCBI Taxonomy" id="10090"/>
    <lineage>
        <taxon>Eukaryota</taxon>
        <taxon>Metazoa</taxon>
        <taxon>Chordata</taxon>
        <taxon>Craniata</taxon>
        <taxon>Vertebrata</taxon>
        <taxon>Euteleostomi</taxon>
        <taxon>Mammalia</taxon>
        <taxon>Eutheria</taxon>
        <taxon>Euarchontoglires</taxon>
        <taxon>Glires</taxon>
        <taxon>Rodentia</taxon>
        <taxon>Myomorpha</taxon>
        <taxon>Muroidea</taxon>
        <taxon>Muridae</taxon>
        <taxon>Murinae</taxon>
        <taxon>Mus</taxon>
        <taxon>Mus</taxon>
    </lineage>
</organism>
<reference key="1">
    <citation type="journal article" date="1991" name="Nature">
        <title>New class II-like genes in the murine MHC.</title>
        <authorList>
            <person name="Cho S."/>
            <person name="Attaya M."/>
            <person name="Monaco J.J."/>
        </authorList>
    </citation>
    <scope>NUCLEOTIDE SEQUENCE [MRNA]</scope>
    <source>
        <strain>BALB/cJ</strain>
    </source>
</reference>
<reference key="2">
    <citation type="journal article" date="1996" name="Immunogenetics">
        <title>Genomic organization of a mouse MHC class II region including the H2-M and Lmp2 loci.</title>
        <authorList>
            <person name="Peleraux A."/>
            <person name="Karlsson L."/>
            <person name="Chambers J."/>
            <person name="Peterson P.A."/>
        </authorList>
    </citation>
    <scope>NUCLEOTIDE SEQUENCE [GENOMIC DNA]</scope>
    <source>
        <strain>BALB/cJ</strain>
    </source>
</reference>
<reference key="3">
    <citation type="journal article" date="1995" name="Immunity">
        <title>The MHC class II molecule H2-M is targeted to an endosomal compartment by a tyrosine-based targeting motif.</title>
        <authorList>
            <person name="Lindstedt R."/>
            <person name="Liljedahl M."/>
            <person name="Peleraux A."/>
            <person name="Peterson P.A."/>
            <person name="Karlsson L."/>
        </authorList>
    </citation>
    <scope>SUBCELLULAR LOCATION</scope>
</reference>
<gene>
    <name type="primary">H2-DMb1</name>
    <name type="synonym">H-2Mb1</name>
    <name type="synonym">Mb</name>
</gene>
<feature type="signal peptide" evidence="2">
    <location>
        <begin position="1"/>
        <end position="18"/>
    </location>
</feature>
<feature type="chain" id="PRO_0000018961" description="Class II histocompatibility antigen, M beta 1 chain">
    <location>
        <begin position="19"/>
        <end position="261"/>
    </location>
</feature>
<feature type="topological domain" description="Lumenal" evidence="2">
    <location>
        <begin position="19"/>
        <end position="218"/>
    </location>
</feature>
<feature type="transmembrane region" description="Helical" evidence="2">
    <location>
        <begin position="219"/>
        <end position="239"/>
    </location>
</feature>
<feature type="topological domain" description="Cytoplasmic" evidence="2">
    <location>
        <begin position="240"/>
        <end position="261"/>
    </location>
</feature>
<feature type="domain" description="Ig-like C1-type">
    <location>
        <begin position="114"/>
        <end position="204"/>
    </location>
</feature>
<feature type="region of interest" description="Beta-1">
    <location>
        <begin position="19"/>
        <end position="112"/>
    </location>
</feature>
<feature type="region of interest" description="Beta-2">
    <location>
        <begin position="113"/>
        <end position="207"/>
    </location>
</feature>
<feature type="region of interest" description="Connecting peptide" evidence="2">
    <location>
        <begin position="208"/>
        <end position="218"/>
    </location>
</feature>
<feature type="short sequence motif" description="YXXZ motif">
    <location>
        <begin position="248"/>
        <end position="251"/>
    </location>
</feature>
<feature type="glycosylation site" description="N-linked (GlcNAc...) asparagine" evidence="2">
    <location>
        <position position="75"/>
    </location>
</feature>
<feature type="disulfide bond" evidence="1 3">
    <location>
        <begin position="29"/>
        <end position="97"/>
    </location>
</feature>
<feature type="disulfide bond" evidence="1">
    <location>
        <begin position="43"/>
        <end position="53"/>
    </location>
</feature>
<feature type="disulfide bond" evidence="1 3">
    <location>
        <begin position="135"/>
        <end position="192"/>
    </location>
</feature>
<keyword id="KW-1064">Adaptive immunity</keyword>
<keyword id="KW-1015">Disulfide bond</keyword>
<keyword id="KW-0967">Endosome</keyword>
<keyword id="KW-0325">Glycoprotein</keyword>
<keyword id="KW-0391">Immunity</keyword>
<keyword id="KW-0458">Lysosome</keyword>
<keyword id="KW-0472">Membrane</keyword>
<keyword id="KW-0491">MHC II</keyword>
<keyword id="KW-1185">Reference proteome</keyword>
<keyword id="KW-0732">Signal</keyword>
<keyword id="KW-0812">Transmembrane</keyword>
<keyword id="KW-1133">Transmembrane helix</keyword>
<sequence>MAALWLLLLVLSLHCMGAGGFVAHVESTCVLDDAGTPQDFTYCVSFNKDLLACWDPIVGKIVPCEFGVLYPLAENFSRILNKEESLLQRLQNGLPDCASHTQPFWNALTHRTRPPSVRVAQTTPFNTREPVMLACYVWGFYPADVTITWMKNGQLVPSHSNKEKTAQPNGDWTYQTVSYLALTPSYGDVYTCVVQHSGTSEPIRGDWTPGLSPIQTVKVSVSAATLGLGFIIFCVGFFRWRKSHSSSYTPLSGSTYPEGRH</sequence>
<name>DMB_MOUSE</name>
<accession>P35737</accession>
<dbReference type="EMBL" id="X62743">
    <property type="protein sequence ID" value="CAA44605.1"/>
    <property type="molecule type" value="mRNA"/>
</dbReference>
<dbReference type="EMBL" id="U35323">
    <property type="protein sequence ID" value="AAA98931.1"/>
    <property type="molecule type" value="Genomic_DNA"/>
</dbReference>
<dbReference type="CCDS" id="CCDS37581.1"/>
<dbReference type="PIR" id="S17889">
    <property type="entry name" value="S17889"/>
</dbReference>
<dbReference type="SMR" id="P35737"/>
<dbReference type="FunCoup" id="P35737">
    <property type="interactions" value="91"/>
</dbReference>
<dbReference type="STRING" id="10090.ENSMUSP00000109870"/>
<dbReference type="GlyCosmos" id="P35737">
    <property type="glycosylation" value="1 site, No reported glycans"/>
</dbReference>
<dbReference type="GlyGen" id="P35737">
    <property type="glycosylation" value="1 site"/>
</dbReference>
<dbReference type="iPTMnet" id="P35737"/>
<dbReference type="PhosphoSitePlus" id="P35737"/>
<dbReference type="PaxDb" id="10090-ENSMUSP00000109870"/>
<dbReference type="ProteomicsDB" id="279786"/>
<dbReference type="Pumba" id="P35737"/>
<dbReference type="AGR" id="MGI:95922"/>
<dbReference type="MGI" id="MGI:95922">
    <property type="gene designation" value="H2-DMb1"/>
</dbReference>
<dbReference type="eggNOG" id="ENOG502SAA4">
    <property type="taxonomic scope" value="Eukaryota"/>
</dbReference>
<dbReference type="InParanoid" id="P35737"/>
<dbReference type="PhylomeDB" id="P35737"/>
<dbReference type="Reactome" id="R-MMU-2132295">
    <property type="pathway name" value="MHC class II antigen presentation"/>
</dbReference>
<dbReference type="ChiTaRS" id="H2-DMb1">
    <property type="organism name" value="mouse"/>
</dbReference>
<dbReference type="PRO" id="PR:P35737"/>
<dbReference type="Proteomes" id="UP000000589">
    <property type="component" value="Unplaced"/>
</dbReference>
<dbReference type="RNAct" id="P35737">
    <property type="molecule type" value="protein"/>
</dbReference>
<dbReference type="GO" id="GO:0031902">
    <property type="term" value="C:late endosome membrane"/>
    <property type="evidence" value="ECO:0000250"/>
    <property type="project" value="UniProtKB"/>
</dbReference>
<dbReference type="GO" id="GO:0005765">
    <property type="term" value="C:lysosomal membrane"/>
    <property type="evidence" value="ECO:0000250"/>
    <property type="project" value="UniProtKB"/>
</dbReference>
<dbReference type="GO" id="GO:0042613">
    <property type="term" value="C:MHC class II protein complex"/>
    <property type="evidence" value="ECO:0007669"/>
    <property type="project" value="UniProtKB-KW"/>
</dbReference>
<dbReference type="GO" id="GO:0023026">
    <property type="term" value="F:MHC class II protein complex binding"/>
    <property type="evidence" value="ECO:0000250"/>
    <property type="project" value="UniProtKB"/>
</dbReference>
<dbReference type="GO" id="GO:0002250">
    <property type="term" value="P:adaptive immune response"/>
    <property type="evidence" value="ECO:0007669"/>
    <property type="project" value="UniProtKB-KW"/>
</dbReference>
<dbReference type="GO" id="GO:0019882">
    <property type="term" value="P:antigen processing and presentation"/>
    <property type="evidence" value="ECO:0000314"/>
    <property type="project" value="MGI"/>
</dbReference>
<dbReference type="GO" id="GO:0019886">
    <property type="term" value="P:antigen processing and presentation of exogenous peptide antigen via MHC class II"/>
    <property type="evidence" value="ECO:0000314"/>
    <property type="project" value="MGI"/>
</dbReference>
<dbReference type="GO" id="GO:0051085">
    <property type="term" value="P:chaperone cofactor-dependent protein refolding"/>
    <property type="evidence" value="ECO:0000314"/>
    <property type="project" value="MGI"/>
</dbReference>
<dbReference type="GO" id="GO:0002503">
    <property type="term" value="P:peptide antigen assembly with MHC class II protein complex"/>
    <property type="evidence" value="ECO:0000250"/>
    <property type="project" value="UniProtKB"/>
</dbReference>
<dbReference type="CDD" id="cd21002">
    <property type="entry name" value="IgC1_MHC_II_beta_HLA-DM"/>
    <property type="match status" value="1"/>
</dbReference>
<dbReference type="FunFam" id="2.60.40.10:FF:000968">
    <property type="entry name" value="MHC class II H2-M beta 2 chain"/>
    <property type="match status" value="1"/>
</dbReference>
<dbReference type="Gene3D" id="3.10.320.10">
    <property type="entry name" value="Class II Histocompatibility Antigen, M Beta Chain, Chain B, domain 1"/>
    <property type="match status" value="1"/>
</dbReference>
<dbReference type="Gene3D" id="2.60.40.10">
    <property type="entry name" value="Immunoglobulins"/>
    <property type="match status" value="1"/>
</dbReference>
<dbReference type="InterPro" id="IPR007110">
    <property type="entry name" value="Ig-like_dom"/>
</dbReference>
<dbReference type="InterPro" id="IPR036179">
    <property type="entry name" value="Ig-like_dom_sf"/>
</dbReference>
<dbReference type="InterPro" id="IPR013783">
    <property type="entry name" value="Ig-like_fold"/>
</dbReference>
<dbReference type="InterPro" id="IPR003006">
    <property type="entry name" value="Ig/MHC_CS"/>
</dbReference>
<dbReference type="InterPro" id="IPR003597">
    <property type="entry name" value="Ig_C1-set"/>
</dbReference>
<dbReference type="InterPro" id="IPR050160">
    <property type="entry name" value="MHC/Immunoglobulin"/>
</dbReference>
<dbReference type="InterPro" id="IPR011162">
    <property type="entry name" value="MHC_I/II-like_Ag-recog"/>
</dbReference>
<dbReference type="InterPro" id="IPR014745">
    <property type="entry name" value="MHC_II_a/b_N"/>
</dbReference>
<dbReference type="InterPro" id="IPR000353">
    <property type="entry name" value="MHC_II_b_N"/>
</dbReference>
<dbReference type="PANTHER" id="PTHR19944:SF65">
    <property type="entry name" value="HLA CLASS II HISTOCOMPATIBILITY ANTIGEN, DM BETA CHAIN"/>
    <property type="match status" value="1"/>
</dbReference>
<dbReference type="PANTHER" id="PTHR19944">
    <property type="entry name" value="MHC CLASS II-RELATED"/>
    <property type="match status" value="1"/>
</dbReference>
<dbReference type="Pfam" id="PF07654">
    <property type="entry name" value="C1-set"/>
    <property type="match status" value="1"/>
</dbReference>
<dbReference type="Pfam" id="PF00969">
    <property type="entry name" value="MHC_II_beta"/>
    <property type="match status" value="1"/>
</dbReference>
<dbReference type="SMART" id="SM00407">
    <property type="entry name" value="IGc1"/>
    <property type="match status" value="1"/>
</dbReference>
<dbReference type="SMART" id="SM00921">
    <property type="entry name" value="MHC_II_beta"/>
    <property type="match status" value="1"/>
</dbReference>
<dbReference type="SUPFAM" id="SSF48726">
    <property type="entry name" value="Immunoglobulin"/>
    <property type="match status" value="1"/>
</dbReference>
<dbReference type="SUPFAM" id="SSF54452">
    <property type="entry name" value="MHC antigen-recognition domain"/>
    <property type="match status" value="1"/>
</dbReference>
<dbReference type="PROSITE" id="PS50835">
    <property type="entry name" value="IG_LIKE"/>
    <property type="match status" value="1"/>
</dbReference>
<dbReference type="PROSITE" id="PS00290">
    <property type="entry name" value="IG_MHC"/>
    <property type="match status" value="1"/>
</dbReference>
<evidence type="ECO:0000250" key="1">
    <source>
        <dbReference type="UniProtKB" id="P28068"/>
    </source>
</evidence>
<evidence type="ECO:0000255" key="2"/>
<evidence type="ECO:0000255" key="3">
    <source>
        <dbReference type="PROSITE-ProRule" id="PRU00114"/>
    </source>
</evidence>
<evidence type="ECO:0000269" key="4">
    <source>
    </source>
</evidence>
<evidence type="ECO:0000305" key="5"/>
<proteinExistence type="evidence at transcript level"/>
<protein>
    <recommendedName>
        <fullName>Class II histocompatibility antigen, M beta 1 chain</fullName>
    </recommendedName>
    <alternativeName>
        <fullName>H2-M beta 1 chain</fullName>
    </alternativeName>
</protein>